<accession>B2T725</accession>
<keyword id="KW-0240">DNA-directed RNA polymerase</keyword>
<keyword id="KW-0548">Nucleotidyltransferase</keyword>
<keyword id="KW-0804">Transcription</keyword>
<keyword id="KW-0808">Transferase</keyword>
<organism>
    <name type="scientific">Paraburkholderia phytofirmans (strain DSM 17436 / LMG 22146 / PsJN)</name>
    <name type="common">Burkholderia phytofirmans</name>
    <dbReference type="NCBI Taxonomy" id="398527"/>
    <lineage>
        <taxon>Bacteria</taxon>
        <taxon>Pseudomonadati</taxon>
        <taxon>Pseudomonadota</taxon>
        <taxon>Betaproteobacteria</taxon>
        <taxon>Burkholderiales</taxon>
        <taxon>Burkholderiaceae</taxon>
        <taxon>Paraburkholderia</taxon>
    </lineage>
</organism>
<reference key="1">
    <citation type="journal article" date="2011" name="J. Bacteriol.">
        <title>Complete genome sequence of the plant growth-promoting endophyte Burkholderia phytofirmans strain PsJN.</title>
        <authorList>
            <person name="Weilharter A."/>
            <person name="Mitter B."/>
            <person name="Shin M.V."/>
            <person name="Chain P.S."/>
            <person name="Nowak J."/>
            <person name="Sessitsch A."/>
        </authorList>
    </citation>
    <scope>NUCLEOTIDE SEQUENCE [LARGE SCALE GENOMIC DNA]</scope>
    <source>
        <strain>DSM 17436 / LMG 22146 / PsJN</strain>
    </source>
</reference>
<feature type="chain" id="PRO_1000091930" description="DNA-directed RNA polymerase subunit alpha">
    <location>
        <begin position="1"/>
        <end position="325"/>
    </location>
</feature>
<feature type="region of interest" description="Alpha N-terminal domain (alpha-NTD)" evidence="1">
    <location>
        <begin position="1"/>
        <end position="231"/>
    </location>
</feature>
<feature type="region of interest" description="Alpha C-terminal domain (alpha-CTD)" evidence="1">
    <location>
        <begin position="246"/>
        <end position="325"/>
    </location>
</feature>
<dbReference type="EC" id="2.7.7.6" evidence="1"/>
<dbReference type="EMBL" id="CP001052">
    <property type="protein sequence ID" value="ACD18008.1"/>
    <property type="molecule type" value="Genomic_DNA"/>
</dbReference>
<dbReference type="RefSeq" id="WP_006052226.1">
    <property type="nucleotide sequence ID" value="NC_010681.1"/>
</dbReference>
<dbReference type="SMR" id="B2T725"/>
<dbReference type="STRING" id="398527.Bphyt_3618"/>
<dbReference type="KEGG" id="bpy:Bphyt_3618"/>
<dbReference type="eggNOG" id="COG0202">
    <property type="taxonomic scope" value="Bacteria"/>
</dbReference>
<dbReference type="HOGENOM" id="CLU_053084_0_0_4"/>
<dbReference type="OrthoDB" id="9805706at2"/>
<dbReference type="Proteomes" id="UP000001739">
    <property type="component" value="Chromosome 1"/>
</dbReference>
<dbReference type="GO" id="GO:0005737">
    <property type="term" value="C:cytoplasm"/>
    <property type="evidence" value="ECO:0007669"/>
    <property type="project" value="UniProtKB-ARBA"/>
</dbReference>
<dbReference type="GO" id="GO:0000428">
    <property type="term" value="C:DNA-directed RNA polymerase complex"/>
    <property type="evidence" value="ECO:0007669"/>
    <property type="project" value="UniProtKB-KW"/>
</dbReference>
<dbReference type="GO" id="GO:0003677">
    <property type="term" value="F:DNA binding"/>
    <property type="evidence" value="ECO:0007669"/>
    <property type="project" value="UniProtKB-UniRule"/>
</dbReference>
<dbReference type="GO" id="GO:0003899">
    <property type="term" value="F:DNA-directed RNA polymerase activity"/>
    <property type="evidence" value="ECO:0007669"/>
    <property type="project" value="UniProtKB-UniRule"/>
</dbReference>
<dbReference type="GO" id="GO:0046983">
    <property type="term" value="F:protein dimerization activity"/>
    <property type="evidence" value="ECO:0007669"/>
    <property type="project" value="InterPro"/>
</dbReference>
<dbReference type="GO" id="GO:0006351">
    <property type="term" value="P:DNA-templated transcription"/>
    <property type="evidence" value="ECO:0007669"/>
    <property type="project" value="UniProtKB-UniRule"/>
</dbReference>
<dbReference type="CDD" id="cd06928">
    <property type="entry name" value="RNAP_alpha_NTD"/>
    <property type="match status" value="1"/>
</dbReference>
<dbReference type="FunFam" id="1.10.150.20:FF:000001">
    <property type="entry name" value="DNA-directed RNA polymerase subunit alpha"/>
    <property type="match status" value="1"/>
</dbReference>
<dbReference type="FunFam" id="2.170.120.12:FF:000001">
    <property type="entry name" value="DNA-directed RNA polymerase subunit alpha"/>
    <property type="match status" value="1"/>
</dbReference>
<dbReference type="Gene3D" id="1.10.150.20">
    <property type="entry name" value="5' to 3' exonuclease, C-terminal subdomain"/>
    <property type="match status" value="1"/>
</dbReference>
<dbReference type="Gene3D" id="2.170.120.12">
    <property type="entry name" value="DNA-directed RNA polymerase, insert domain"/>
    <property type="match status" value="1"/>
</dbReference>
<dbReference type="Gene3D" id="3.30.1360.10">
    <property type="entry name" value="RNA polymerase, RBP11-like subunit"/>
    <property type="match status" value="1"/>
</dbReference>
<dbReference type="HAMAP" id="MF_00059">
    <property type="entry name" value="RNApol_bact_RpoA"/>
    <property type="match status" value="1"/>
</dbReference>
<dbReference type="InterPro" id="IPR011262">
    <property type="entry name" value="DNA-dir_RNA_pol_insert"/>
</dbReference>
<dbReference type="InterPro" id="IPR011263">
    <property type="entry name" value="DNA-dir_RNA_pol_RpoA/D/Rpb3"/>
</dbReference>
<dbReference type="InterPro" id="IPR011773">
    <property type="entry name" value="DNA-dir_RpoA"/>
</dbReference>
<dbReference type="InterPro" id="IPR036603">
    <property type="entry name" value="RBP11-like"/>
</dbReference>
<dbReference type="InterPro" id="IPR011260">
    <property type="entry name" value="RNAP_asu_C"/>
</dbReference>
<dbReference type="InterPro" id="IPR036643">
    <property type="entry name" value="RNApol_insert_sf"/>
</dbReference>
<dbReference type="NCBIfam" id="NF003513">
    <property type="entry name" value="PRK05182.1-2"/>
    <property type="match status" value="1"/>
</dbReference>
<dbReference type="NCBIfam" id="NF003519">
    <property type="entry name" value="PRK05182.2-5"/>
    <property type="match status" value="1"/>
</dbReference>
<dbReference type="NCBIfam" id="TIGR02027">
    <property type="entry name" value="rpoA"/>
    <property type="match status" value="1"/>
</dbReference>
<dbReference type="Pfam" id="PF01000">
    <property type="entry name" value="RNA_pol_A_bac"/>
    <property type="match status" value="1"/>
</dbReference>
<dbReference type="Pfam" id="PF03118">
    <property type="entry name" value="RNA_pol_A_CTD"/>
    <property type="match status" value="1"/>
</dbReference>
<dbReference type="Pfam" id="PF01193">
    <property type="entry name" value="RNA_pol_L"/>
    <property type="match status" value="1"/>
</dbReference>
<dbReference type="SMART" id="SM00662">
    <property type="entry name" value="RPOLD"/>
    <property type="match status" value="1"/>
</dbReference>
<dbReference type="SUPFAM" id="SSF47789">
    <property type="entry name" value="C-terminal domain of RNA polymerase alpha subunit"/>
    <property type="match status" value="1"/>
</dbReference>
<dbReference type="SUPFAM" id="SSF56553">
    <property type="entry name" value="Insert subdomain of RNA polymerase alpha subunit"/>
    <property type="match status" value="1"/>
</dbReference>
<dbReference type="SUPFAM" id="SSF55257">
    <property type="entry name" value="RBP11-like subunits of RNA polymerase"/>
    <property type="match status" value="1"/>
</dbReference>
<comment type="function">
    <text evidence="1">DNA-dependent RNA polymerase catalyzes the transcription of DNA into RNA using the four ribonucleoside triphosphates as substrates.</text>
</comment>
<comment type="catalytic activity">
    <reaction evidence="1">
        <text>RNA(n) + a ribonucleoside 5'-triphosphate = RNA(n+1) + diphosphate</text>
        <dbReference type="Rhea" id="RHEA:21248"/>
        <dbReference type="Rhea" id="RHEA-COMP:14527"/>
        <dbReference type="Rhea" id="RHEA-COMP:17342"/>
        <dbReference type="ChEBI" id="CHEBI:33019"/>
        <dbReference type="ChEBI" id="CHEBI:61557"/>
        <dbReference type="ChEBI" id="CHEBI:140395"/>
        <dbReference type="EC" id="2.7.7.6"/>
    </reaction>
</comment>
<comment type="subunit">
    <text evidence="1">Homodimer. The RNAP catalytic core consists of 2 alpha, 1 beta, 1 beta' and 1 omega subunit. When a sigma factor is associated with the core the holoenzyme is formed, which can initiate transcription.</text>
</comment>
<comment type="domain">
    <text evidence="1">The N-terminal domain is essential for RNAP assembly and basal transcription, whereas the C-terminal domain is involved in interaction with transcriptional regulators and with upstream promoter elements.</text>
</comment>
<comment type="similarity">
    <text evidence="1">Belongs to the RNA polymerase alpha chain family.</text>
</comment>
<proteinExistence type="inferred from homology"/>
<name>RPOA_PARPJ</name>
<sequence length="325" mass="35656">MQTSLLKPKIIAVESLGESHAKVVMEPFERGYGHTLGNALRRVLLSSMIGYAPTEVTIAGVVHEYSTLDGVQEDVVNLLLNLKGVVFKLHNRDEVTVTLRKEGEGVVTAGDIELAHDCEVINPDHVIAHLSKGGKLDVQIKVEKGRGYVPGNVRRYGEESAKIIGRIVLDASFSPVRRVSYAVESARVEQRTDLDKLVMNIETNGVISPEEAIRQSARILVDQLSVFAALEGTEATAEAPSRAPQIDPILLRPVDDLELTVRSANCLKAENIYYIGDLIQRTENELLKTPNLGRKSLNEIKEVLASRGLTLGMKLENWPPAGLDK</sequence>
<protein>
    <recommendedName>
        <fullName evidence="1">DNA-directed RNA polymerase subunit alpha</fullName>
        <shortName evidence="1">RNAP subunit alpha</shortName>
        <ecNumber evidence="1">2.7.7.6</ecNumber>
    </recommendedName>
    <alternativeName>
        <fullName evidence="1">RNA polymerase subunit alpha</fullName>
    </alternativeName>
    <alternativeName>
        <fullName evidence="1">Transcriptase subunit alpha</fullName>
    </alternativeName>
</protein>
<evidence type="ECO:0000255" key="1">
    <source>
        <dbReference type="HAMAP-Rule" id="MF_00059"/>
    </source>
</evidence>
<gene>
    <name evidence="1" type="primary">rpoA</name>
    <name type="ordered locus">Bphyt_3618</name>
</gene>